<sequence>MKKVVKYLISLILAIIIVLFVQTFVIVGHVIPNNDMSPTLNKGDRVIVNKIKVTFNQLNNGDIITYRRGNEIYTSRIIAKPGQSMAFRQGQLYRDDRPVDASYAKNRKIKDFSLRNFKELDGDIIPPNNFVVLNDHDNNQHDSRQFGLIDKKDIIGNISLRYYPFSKWTIQFKS</sequence>
<keyword id="KW-1003">Cell membrane</keyword>
<keyword id="KW-0472">Membrane</keyword>
<keyword id="KW-0812">Transmembrane</keyword>
<keyword id="KW-1133">Transmembrane helix</keyword>
<name>LEPH_STAAW</name>
<gene>
    <name type="primary">spsA</name>
    <name type="ordered locus">MW0846</name>
</gene>
<evidence type="ECO:0000250" key="1"/>
<evidence type="ECO:0000255" key="2"/>
<evidence type="ECO:0000305" key="3"/>
<dbReference type="EMBL" id="BA000033">
    <property type="protein sequence ID" value="BAB94711.1"/>
    <property type="molecule type" value="Genomic_DNA"/>
</dbReference>
<dbReference type="SMR" id="P0A065"/>
<dbReference type="KEGG" id="sam:MW0846"/>
<dbReference type="HOGENOM" id="CLU_028723_5_0_9"/>
<dbReference type="GO" id="GO:0005886">
    <property type="term" value="C:plasma membrane"/>
    <property type="evidence" value="ECO:0007669"/>
    <property type="project" value="UniProtKB-SubCell"/>
</dbReference>
<dbReference type="GO" id="GO:0004252">
    <property type="term" value="F:serine-type endopeptidase activity"/>
    <property type="evidence" value="ECO:0007669"/>
    <property type="project" value="InterPro"/>
</dbReference>
<dbReference type="GO" id="GO:0006465">
    <property type="term" value="P:signal peptide processing"/>
    <property type="evidence" value="ECO:0007669"/>
    <property type="project" value="InterPro"/>
</dbReference>
<dbReference type="CDD" id="cd06530">
    <property type="entry name" value="S26_SPase_I"/>
    <property type="match status" value="1"/>
</dbReference>
<dbReference type="Gene3D" id="2.10.109.10">
    <property type="entry name" value="Umud Fragment, subunit A"/>
    <property type="match status" value="1"/>
</dbReference>
<dbReference type="InterPro" id="IPR036286">
    <property type="entry name" value="LexA/Signal_pep-like_sf"/>
</dbReference>
<dbReference type="InterPro" id="IPR000223">
    <property type="entry name" value="Pept_S26A_signal_pept_1"/>
</dbReference>
<dbReference type="InterPro" id="IPR019533">
    <property type="entry name" value="Peptidase_S26"/>
</dbReference>
<dbReference type="NCBIfam" id="TIGR02227">
    <property type="entry name" value="sigpep_I_bact"/>
    <property type="match status" value="1"/>
</dbReference>
<dbReference type="PANTHER" id="PTHR43390:SF1">
    <property type="entry name" value="CHLOROPLAST PROCESSING PEPTIDASE"/>
    <property type="match status" value="1"/>
</dbReference>
<dbReference type="PANTHER" id="PTHR43390">
    <property type="entry name" value="SIGNAL PEPTIDASE I"/>
    <property type="match status" value="1"/>
</dbReference>
<dbReference type="Pfam" id="PF10502">
    <property type="entry name" value="Peptidase_S26"/>
    <property type="match status" value="1"/>
</dbReference>
<dbReference type="PRINTS" id="PR00727">
    <property type="entry name" value="LEADERPTASE"/>
</dbReference>
<dbReference type="SUPFAM" id="SSF51306">
    <property type="entry name" value="LexA/Signal peptidase"/>
    <property type="match status" value="1"/>
</dbReference>
<comment type="function">
    <text evidence="1">Catalytically inactive.</text>
</comment>
<comment type="subcellular location">
    <subcellularLocation>
        <location evidence="3">Cell membrane</location>
        <topology evidence="3">Single-pass type II membrane protein</topology>
    </subcellularLocation>
</comment>
<comment type="similarity">
    <text evidence="3">Belongs to the peptidase S26 family.</text>
</comment>
<feature type="chain" id="PRO_0000109524" description="Inactive signal peptidase IA">
    <location>
        <begin position="1"/>
        <end position="174"/>
    </location>
</feature>
<feature type="topological domain" description="Cytoplasmic" evidence="2">
    <location>
        <begin position="1"/>
        <end position="7"/>
    </location>
</feature>
<feature type="transmembrane region" description="Helical" evidence="2">
    <location>
        <begin position="8"/>
        <end position="28"/>
    </location>
</feature>
<feature type="topological domain" description="Extracellular" evidence="2">
    <location>
        <begin position="29"/>
        <end position="174"/>
    </location>
</feature>
<proteinExistence type="inferred from homology"/>
<reference key="1">
    <citation type="journal article" date="2002" name="Lancet">
        <title>Genome and virulence determinants of high virulence community-acquired MRSA.</title>
        <authorList>
            <person name="Baba T."/>
            <person name="Takeuchi F."/>
            <person name="Kuroda M."/>
            <person name="Yuzawa H."/>
            <person name="Aoki K."/>
            <person name="Oguchi A."/>
            <person name="Nagai Y."/>
            <person name="Iwama N."/>
            <person name="Asano K."/>
            <person name="Naimi T."/>
            <person name="Kuroda H."/>
            <person name="Cui L."/>
            <person name="Yamamoto K."/>
            <person name="Hiramatsu K."/>
        </authorList>
    </citation>
    <scope>NUCLEOTIDE SEQUENCE [LARGE SCALE GENOMIC DNA]</scope>
    <source>
        <strain>MW2</strain>
    </source>
</reference>
<protein>
    <recommendedName>
        <fullName>Inactive signal peptidase IA</fullName>
    </recommendedName>
</protein>
<organism>
    <name type="scientific">Staphylococcus aureus (strain MW2)</name>
    <dbReference type="NCBI Taxonomy" id="196620"/>
    <lineage>
        <taxon>Bacteria</taxon>
        <taxon>Bacillati</taxon>
        <taxon>Bacillota</taxon>
        <taxon>Bacilli</taxon>
        <taxon>Bacillales</taxon>
        <taxon>Staphylococcaceae</taxon>
        <taxon>Staphylococcus</taxon>
    </lineage>
</organism>
<accession>P0A065</accession>
<accession>P72364</accession>